<gene>
    <name type="ordered locus">HI_1487</name>
</gene>
<proteinExistence type="predicted"/>
<feature type="chain" id="PRO_0000078071" description="Uncharacterized protein HI_1487">
    <location>
        <begin position="1"/>
        <end position="186"/>
    </location>
</feature>
<protein>
    <recommendedName>
        <fullName>Uncharacterized protein HI_1487</fullName>
    </recommendedName>
</protein>
<organism>
    <name type="scientific">Haemophilus influenzae (strain ATCC 51907 / DSM 11121 / KW20 / Rd)</name>
    <dbReference type="NCBI Taxonomy" id="71421"/>
    <lineage>
        <taxon>Bacteria</taxon>
        <taxon>Pseudomonadati</taxon>
        <taxon>Pseudomonadota</taxon>
        <taxon>Gammaproteobacteria</taxon>
        <taxon>Pasteurellales</taxon>
        <taxon>Pasteurellaceae</taxon>
        <taxon>Haemophilus</taxon>
    </lineage>
</organism>
<dbReference type="EMBL" id="L42023">
    <property type="protein sequence ID" value="AAC23142.1"/>
    <property type="molecule type" value="Genomic_DNA"/>
</dbReference>
<dbReference type="PIR" id="H64031">
    <property type="entry name" value="H64031"/>
</dbReference>
<dbReference type="RefSeq" id="NP_439637.1">
    <property type="nucleotide sequence ID" value="NC_000907.1"/>
</dbReference>
<dbReference type="STRING" id="71421.HI_1487"/>
<dbReference type="EnsemblBacteria" id="AAC23142">
    <property type="protein sequence ID" value="AAC23142"/>
    <property type="gene ID" value="HI_1487"/>
</dbReference>
<dbReference type="KEGG" id="hin:HI_1487"/>
<dbReference type="PATRIC" id="fig|71421.8.peg.1555"/>
<dbReference type="eggNOG" id="ENOG5031K1Y">
    <property type="taxonomic scope" value="Bacteria"/>
</dbReference>
<dbReference type="HOGENOM" id="CLU_1452533_0_0_6"/>
<dbReference type="OrthoDB" id="5690160at2"/>
<dbReference type="BioCyc" id="HINF71421:G1GJ1-1511-MONOMER"/>
<dbReference type="Proteomes" id="UP000000579">
    <property type="component" value="Chromosome"/>
</dbReference>
<dbReference type="InterPro" id="IPR035360">
    <property type="entry name" value="DUF5420"/>
</dbReference>
<dbReference type="Pfam" id="PF17457">
    <property type="entry name" value="DUF5420"/>
    <property type="match status" value="1"/>
</dbReference>
<reference key="1">
    <citation type="journal article" date="1995" name="Science">
        <title>Whole-genome random sequencing and assembly of Haemophilus influenzae Rd.</title>
        <authorList>
            <person name="Fleischmann R.D."/>
            <person name="Adams M.D."/>
            <person name="White O."/>
            <person name="Clayton R.A."/>
            <person name="Kirkness E.F."/>
            <person name="Kerlavage A.R."/>
            <person name="Bult C.J."/>
            <person name="Tomb J.-F."/>
            <person name="Dougherty B.A."/>
            <person name="Merrick J.M."/>
            <person name="McKenney K."/>
            <person name="Sutton G.G."/>
            <person name="FitzHugh W."/>
            <person name="Fields C.A."/>
            <person name="Gocayne J.D."/>
            <person name="Scott J.D."/>
            <person name="Shirley R."/>
            <person name="Liu L.-I."/>
            <person name="Glodek A."/>
            <person name="Kelley J.M."/>
            <person name="Weidman J.F."/>
            <person name="Phillips C.A."/>
            <person name="Spriggs T."/>
            <person name="Hedblom E."/>
            <person name="Cotton M.D."/>
            <person name="Utterback T.R."/>
            <person name="Hanna M.C."/>
            <person name="Nguyen D.T."/>
            <person name="Saudek D.M."/>
            <person name="Brandon R.C."/>
            <person name="Fine L.D."/>
            <person name="Fritchman J.L."/>
            <person name="Fuhrmann J.L."/>
            <person name="Geoghagen N.S.M."/>
            <person name="Gnehm C.L."/>
            <person name="McDonald L.A."/>
            <person name="Small K.V."/>
            <person name="Fraser C.M."/>
            <person name="Smith H.O."/>
            <person name="Venter J.C."/>
        </authorList>
    </citation>
    <scope>NUCLEOTIDE SEQUENCE [LARGE SCALE GENOMIC DNA]</scope>
    <source>
        <strain>ATCC 51907 / DSM 11121 / KW20 / Rd</strain>
    </source>
</reference>
<accession>P44214</accession>
<name>Y1487_HAEIN</name>
<keyword id="KW-1185">Reference proteome</keyword>
<sequence>MNAIQFRYFKGVMTKEPLKTIIDTWYKLRAERDKKLTNIFNTIPFYESWLGDETSIFGIVCSYDNPARDEAVLTKGYRTEDYKGKCVVKPDRRYKVGKDFDKKLQAIRQILKEAPDFSSYSLKELGMYLLVGNFSRLYFSVSGVQDDIYIAKIPVKEQGNFGDDFLEIHECLTEIKESEFLSIQGL</sequence>